<name>KNOS4_ORYSJ</name>
<evidence type="ECO:0000255" key="1">
    <source>
        <dbReference type="PROSITE-ProRule" id="PRU00108"/>
    </source>
</evidence>
<evidence type="ECO:0000255" key="2">
    <source>
        <dbReference type="PROSITE-ProRule" id="PRU00559"/>
    </source>
</evidence>
<evidence type="ECO:0000256" key="3">
    <source>
        <dbReference type="SAM" id="MobiDB-lite"/>
    </source>
</evidence>
<evidence type="ECO:0000305" key="4"/>
<feature type="chain" id="PRO_0000360007" description="Homeobox protein knotted-1-like 4">
    <location>
        <begin position="1"/>
        <end position="337"/>
    </location>
</feature>
<feature type="domain" description="ELK" evidence="2">
    <location>
        <begin position="200"/>
        <end position="220"/>
    </location>
</feature>
<feature type="DNA-binding region" description="Homeobox; TALE-type" evidence="1">
    <location>
        <begin position="221"/>
        <end position="284"/>
    </location>
</feature>
<feature type="region of interest" description="Disordered" evidence="3">
    <location>
        <begin position="1"/>
        <end position="56"/>
    </location>
</feature>
<feature type="region of interest" description="Disordered" evidence="3">
    <location>
        <begin position="159"/>
        <end position="190"/>
    </location>
</feature>
<feature type="compositionally biased region" description="Low complexity" evidence="3">
    <location>
        <begin position="27"/>
        <end position="38"/>
    </location>
</feature>
<keyword id="KW-0238">DNA-binding</keyword>
<keyword id="KW-0371">Homeobox</keyword>
<keyword id="KW-0539">Nucleus</keyword>
<keyword id="KW-1185">Reference proteome</keyword>
<accession>Q75LX7</accession>
<accession>Q0DPP7</accession>
<accession>Q10FC2</accession>
<accession>Q10FC3</accession>
<accession>Q84R71</accession>
<accession>Q9XIV4</accession>
<proteinExistence type="evidence at transcript level"/>
<protein>
    <recommendedName>
        <fullName>Homeobox protein knotted-1-like 4</fullName>
    </recommendedName>
    <alternativeName>
        <fullName>Homeobox protein OSH10</fullName>
    </alternativeName>
</protein>
<sequence length="337" mass="36811">MEQQLPLLAPDSKAATSSPLCLTLDNPTSTSTSPAVPSSAPPPAAALEPSRQSFHERETDAIKAKIMSHPLYPALLRAFIDCQKVGAPPEVVGRLSALAGELDSRAEDRYLQGQSSDPELDEFMETYIDMLVSYRQELTRPIQEADQFFRNMEAQIDSFTLDDNGSEGGNSSEDEQEAGGGDMASAGLPEITSPCAEDKELKSHLLNKYSGYLSSLWRELSKKKKKGKLPRDARQKLLHWWQLHYRWPYPSELEKAALAESTGLDAKQINNWFINQRKRHWKPTPPAMEYRSLQPAGAASYGGASAGASTSGGGSAVVRGMEGQHFTGGGAYPRGDP</sequence>
<gene>
    <name type="primary">OSH10</name>
    <name type="ordered locus">Os03g0673000</name>
    <name type="ordered locus">Os03g0673100</name>
    <name type="ordered locus">LOC_Os03g47016/LOC_Os03g47022</name>
    <name type="ORF">OsJ_011583/OsJ_011584</name>
    <name type="ORF">OSJNBa0035I24.12</name>
    <name type="ORF">OSJNBb0113I20.24</name>
</gene>
<reference key="1">
    <citation type="journal article" date="2005" name="Genome Res.">
        <title>Sequence, annotation, and analysis of synteny between rice chromosome 3 and diverged grass species.</title>
        <authorList>
            <consortium name="The rice chromosome 3 sequencing consortium"/>
            <person name="Buell C.R."/>
            <person name="Yuan Q."/>
            <person name="Ouyang S."/>
            <person name="Liu J."/>
            <person name="Zhu W."/>
            <person name="Wang A."/>
            <person name="Maiti R."/>
            <person name="Haas B."/>
            <person name="Wortman J."/>
            <person name="Pertea M."/>
            <person name="Jones K.M."/>
            <person name="Kim M."/>
            <person name="Overton L."/>
            <person name="Tsitrin T."/>
            <person name="Fadrosh D."/>
            <person name="Bera J."/>
            <person name="Weaver B."/>
            <person name="Jin S."/>
            <person name="Johri S."/>
            <person name="Reardon M."/>
            <person name="Webb K."/>
            <person name="Hill J."/>
            <person name="Moffat K."/>
            <person name="Tallon L."/>
            <person name="Van Aken S."/>
            <person name="Lewis M."/>
            <person name="Utterback T."/>
            <person name="Feldblyum T."/>
            <person name="Zismann V."/>
            <person name="Iobst S."/>
            <person name="Hsiao J."/>
            <person name="de Vazeille A.R."/>
            <person name="Salzberg S.L."/>
            <person name="White O."/>
            <person name="Fraser C.M."/>
            <person name="Yu Y."/>
            <person name="Kim H."/>
            <person name="Rambo T."/>
            <person name="Currie J."/>
            <person name="Collura K."/>
            <person name="Kernodle-Thompson S."/>
            <person name="Wei F."/>
            <person name="Kudrna K."/>
            <person name="Ammiraju J.S.S."/>
            <person name="Luo M."/>
            <person name="Goicoechea J.L."/>
            <person name="Wing R.A."/>
            <person name="Henry D."/>
            <person name="Oates R."/>
            <person name="Palmer M."/>
            <person name="Pries G."/>
            <person name="Saski C."/>
            <person name="Simmons J."/>
            <person name="Soderlund C."/>
            <person name="Nelson W."/>
            <person name="de la Bastide M."/>
            <person name="Spiegel L."/>
            <person name="Nascimento L."/>
            <person name="Huang E."/>
            <person name="Preston R."/>
            <person name="Zutavern T."/>
            <person name="Palmer L."/>
            <person name="O'Shaughnessy A."/>
            <person name="Dike S."/>
            <person name="McCombie W.R."/>
            <person name="Minx P."/>
            <person name="Cordum H."/>
            <person name="Wilson R."/>
            <person name="Jin W."/>
            <person name="Lee H.R."/>
            <person name="Jiang J."/>
            <person name="Jackson S."/>
        </authorList>
    </citation>
    <scope>NUCLEOTIDE SEQUENCE [LARGE SCALE GENOMIC DNA]</scope>
    <source>
        <strain>cv. Nipponbare</strain>
    </source>
</reference>
<reference key="2">
    <citation type="journal article" date="2005" name="Nature">
        <title>The map-based sequence of the rice genome.</title>
        <authorList>
            <consortium name="International rice genome sequencing project (IRGSP)"/>
        </authorList>
    </citation>
    <scope>NUCLEOTIDE SEQUENCE [LARGE SCALE GENOMIC DNA]</scope>
    <source>
        <strain>cv. Nipponbare</strain>
    </source>
</reference>
<reference key="3">
    <citation type="journal article" date="2008" name="Nucleic Acids Res.">
        <title>The rice annotation project database (RAP-DB): 2008 update.</title>
        <authorList>
            <consortium name="The rice annotation project (RAP)"/>
        </authorList>
    </citation>
    <scope>GENOME REANNOTATION</scope>
    <source>
        <strain>cv. Nipponbare</strain>
    </source>
</reference>
<reference key="4">
    <citation type="journal article" date="2013" name="Rice">
        <title>Improvement of the Oryza sativa Nipponbare reference genome using next generation sequence and optical map data.</title>
        <authorList>
            <person name="Kawahara Y."/>
            <person name="de la Bastide M."/>
            <person name="Hamilton J.P."/>
            <person name="Kanamori H."/>
            <person name="McCombie W.R."/>
            <person name="Ouyang S."/>
            <person name="Schwartz D.C."/>
            <person name="Tanaka T."/>
            <person name="Wu J."/>
            <person name="Zhou S."/>
            <person name="Childs K.L."/>
            <person name="Davidson R.M."/>
            <person name="Lin H."/>
            <person name="Quesada-Ocampo L."/>
            <person name="Vaillancourt B."/>
            <person name="Sakai H."/>
            <person name="Lee S.S."/>
            <person name="Kim J."/>
            <person name="Numa H."/>
            <person name="Itoh T."/>
            <person name="Buell C.R."/>
            <person name="Matsumoto T."/>
        </authorList>
    </citation>
    <scope>GENOME REANNOTATION</scope>
    <source>
        <strain>cv. Nipponbare</strain>
    </source>
</reference>
<reference key="5">
    <citation type="journal article" date="2005" name="PLoS Biol.">
        <title>The genomes of Oryza sativa: a history of duplications.</title>
        <authorList>
            <person name="Yu J."/>
            <person name="Wang J."/>
            <person name="Lin W."/>
            <person name="Li S."/>
            <person name="Li H."/>
            <person name="Zhou J."/>
            <person name="Ni P."/>
            <person name="Dong W."/>
            <person name="Hu S."/>
            <person name="Zeng C."/>
            <person name="Zhang J."/>
            <person name="Zhang Y."/>
            <person name="Li R."/>
            <person name="Xu Z."/>
            <person name="Li S."/>
            <person name="Li X."/>
            <person name="Zheng H."/>
            <person name="Cong L."/>
            <person name="Lin L."/>
            <person name="Yin J."/>
            <person name="Geng J."/>
            <person name="Li G."/>
            <person name="Shi J."/>
            <person name="Liu J."/>
            <person name="Lv H."/>
            <person name="Li J."/>
            <person name="Wang J."/>
            <person name="Deng Y."/>
            <person name="Ran L."/>
            <person name="Shi X."/>
            <person name="Wang X."/>
            <person name="Wu Q."/>
            <person name="Li C."/>
            <person name="Ren X."/>
            <person name="Wang J."/>
            <person name="Wang X."/>
            <person name="Li D."/>
            <person name="Liu D."/>
            <person name="Zhang X."/>
            <person name="Ji Z."/>
            <person name="Zhao W."/>
            <person name="Sun Y."/>
            <person name="Zhang Z."/>
            <person name="Bao J."/>
            <person name="Han Y."/>
            <person name="Dong L."/>
            <person name="Ji J."/>
            <person name="Chen P."/>
            <person name="Wu S."/>
            <person name="Liu J."/>
            <person name="Xiao Y."/>
            <person name="Bu D."/>
            <person name="Tan J."/>
            <person name="Yang L."/>
            <person name="Ye C."/>
            <person name="Zhang J."/>
            <person name="Xu J."/>
            <person name="Zhou Y."/>
            <person name="Yu Y."/>
            <person name="Zhang B."/>
            <person name="Zhuang S."/>
            <person name="Wei H."/>
            <person name="Liu B."/>
            <person name="Lei M."/>
            <person name="Yu H."/>
            <person name="Li Y."/>
            <person name="Xu H."/>
            <person name="Wei S."/>
            <person name="He X."/>
            <person name="Fang L."/>
            <person name="Zhang Z."/>
            <person name="Zhang Y."/>
            <person name="Huang X."/>
            <person name="Su Z."/>
            <person name="Tong W."/>
            <person name="Li J."/>
            <person name="Tong Z."/>
            <person name="Li S."/>
            <person name="Ye J."/>
            <person name="Wang L."/>
            <person name="Fang L."/>
            <person name="Lei T."/>
            <person name="Chen C.-S."/>
            <person name="Chen H.-C."/>
            <person name="Xu Z."/>
            <person name="Li H."/>
            <person name="Huang H."/>
            <person name="Zhang F."/>
            <person name="Xu H."/>
            <person name="Li N."/>
            <person name="Zhao C."/>
            <person name="Li S."/>
            <person name="Dong L."/>
            <person name="Huang Y."/>
            <person name="Li L."/>
            <person name="Xi Y."/>
            <person name="Qi Q."/>
            <person name="Li W."/>
            <person name="Zhang B."/>
            <person name="Hu W."/>
            <person name="Zhang Y."/>
            <person name="Tian X."/>
            <person name="Jiao Y."/>
            <person name="Liang X."/>
            <person name="Jin J."/>
            <person name="Gao L."/>
            <person name="Zheng W."/>
            <person name="Hao B."/>
            <person name="Liu S.-M."/>
            <person name="Wang W."/>
            <person name="Yuan L."/>
            <person name="Cao M."/>
            <person name="McDermott J."/>
            <person name="Samudrala R."/>
            <person name="Wang J."/>
            <person name="Wong G.K.-S."/>
            <person name="Yang H."/>
        </authorList>
    </citation>
    <scope>NUCLEOTIDE SEQUENCE [LARGE SCALE GENOMIC DNA]</scope>
    <source>
        <strain>cv. Nipponbare</strain>
    </source>
</reference>
<reference key="6">
    <citation type="journal article" date="1999" name="Plant Cell">
        <title>Regional expression of the rice KN1-type homeobox gene family during embryo, shoot, and flower development.</title>
        <authorList>
            <person name="Sentoku N."/>
            <person name="Sato Y."/>
            <person name="Kurata N."/>
            <person name="Ito Y."/>
            <person name="Kitano H."/>
            <person name="Matsuoka M."/>
        </authorList>
    </citation>
    <scope>NUCLEOTIDE SEQUENCE [MRNA] OF 200-276</scope>
    <source>
        <strain>cv. Nipponbare</strain>
        <tissue>Embryo</tissue>
    </source>
</reference>
<reference key="7">
    <citation type="journal article" date="2008" name="FEBS J.">
        <title>Genome-wide identification, classification, evolutionary expansion and expression analyses of homeobox genes in rice.</title>
        <authorList>
            <person name="Jain M."/>
            <person name="Tyagi A.K."/>
            <person name="Khurana J.P."/>
        </authorList>
    </citation>
    <scope>GENE FAMILY</scope>
    <scope>NOMENCLATURE</scope>
</reference>
<comment type="subcellular location">
    <subcellularLocation>
        <location evidence="1 2">Nucleus</location>
    </subcellularLocation>
</comment>
<comment type="similarity">
    <text evidence="2">Belongs to the TALE/KNOX homeobox family.</text>
</comment>
<comment type="sequence caution" evidence="4">
    <conflict type="erroneous gene model prediction">
        <sequence resource="EMBL-CDS" id="ABF98139"/>
    </conflict>
    <text>Was originally thought to correspond to two different genes LOC_Os03g47016 and LOC_Os03g47022.</text>
</comment>
<comment type="sequence caution" evidence="4">
    <conflict type="erroneous gene model prediction">
        <sequence resource="EMBL-CDS" id="ABF98140"/>
    </conflict>
    <text>Was originally thought to correspond to two different genes LOC_Os03g47016 and LOC_Os03g47022.</text>
</comment>
<comment type="sequence caution" evidence="4">
    <conflict type="erroneous gene model prediction">
        <sequence resource="EMBL-CDS" id="BAF12791"/>
    </conflict>
    <text>Was originally thought to correspond to two different genes Os03g0673000 and Os03g0673100.</text>
</comment>
<comment type="sequence caution" evidence="4">
    <conflict type="erroneous gene model prediction">
        <sequence resource="EMBL-CDS" id="BAF12792"/>
    </conflict>
    <text>Was originally thought to correspond to two different genes Os03g0673000 and Os03g0673100.</text>
</comment>
<dbReference type="EMBL" id="AC090683">
    <property type="protein sequence ID" value="AAR87192.1"/>
    <property type="molecule type" value="Genomic_DNA"/>
</dbReference>
<dbReference type="EMBL" id="AC116369">
    <property type="protein sequence ID" value="AAP03383.1"/>
    <property type="molecule type" value="Genomic_DNA"/>
</dbReference>
<dbReference type="EMBL" id="DP000009">
    <property type="protein sequence ID" value="ABF98139.1"/>
    <property type="status" value="ALT_SEQ"/>
    <property type="molecule type" value="Genomic_DNA"/>
</dbReference>
<dbReference type="EMBL" id="DP000009">
    <property type="protein sequence ID" value="ABF98140.1"/>
    <property type="status" value="ALT_SEQ"/>
    <property type="molecule type" value="Genomic_DNA"/>
</dbReference>
<dbReference type="EMBL" id="AP008209">
    <property type="protein sequence ID" value="BAF12791.1"/>
    <property type="status" value="ALT_SEQ"/>
    <property type="molecule type" value="Genomic_DNA"/>
</dbReference>
<dbReference type="EMBL" id="AP008209">
    <property type="protein sequence ID" value="BAF12792.1"/>
    <property type="status" value="ALT_SEQ"/>
    <property type="molecule type" value="Genomic_DNA"/>
</dbReference>
<dbReference type="EMBL" id="AP014959">
    <property type="status" value="NOT_ANNOTATED_CDS"/>
    <property type="molecule type" value="Genomic_DNA"/>
</dbReference>
<dbReference type="EMBL" id="CM000140">
    <property type="status" value="NOT_ANNOTATED_CDS"/>
    <property type="molecule type" value="Genomic_DNA"/>
</dbReference>
<dbReference type="EMBL" id="AB028886">
    <property type="protein sequence ID" value="BAA79227.1"/>
    <property type="molecule type" value="mRNA"/>
</dbReference>
<dbReference type="RefSeq" id="XP_015628832.1">
    <property type="nucleotide sequence ID" value="XM_015773346.1"/>
</dbReference>
<dbReference type="SMR" id="Q75LX7"/>
<dbReference type="FunCoup" id="Q75LX7">
    <property type="interactions" value="245"/>
</dbReference>
<dbReference type="STRING" id="39947.Q75LX7"/>
<dbReference type="PaxDb" id="39947-Q75LX7"/>
<dbReference type="KEGG" id="dosa:Os03g0673000"/>
<dbReference type="eggNOG" id="KOG0773">
    <property type="taxonomic scope" value="Eukaryota"/>
</dbReference>
<dbReference type="InParanoid" id="Q75LX7"/>
<dbReference type="OrthoDB" id="10056939at2759"/>
<dbReference type="Proteomes" id="UP000000763">
    <property type="component" value="Chromosome 3"/>
</dbReference>
<dbReference type="Proteomes" id="UP000007752">
    <property type="component" value="Chromosome 3"/>
</dbReference>
<dbReference type="Proteomes" id="UP000059680">
    <property type="component" value="Chromosome 3"/>
</dbReference>
<dbReference type="GO" id="GO:0005634">
    <property type="term" value="C:nucleus"/>
    <property type="evidence" value="ECO:0000318"/>
    <property type="project" value="GO_Central"/>
</dbReference>
<dbReference type="GO" id="GO:0003677">
    <property type="term" value="F:DNA binding"/>
    <property type="evidence" value="ECO:0007669"/>
    <property type="project" value="UniProtKB-KW"/>
</dbReference>
<dbReference type="GO" id="GO:0000981">
    <property type="term" value="F:DNA-binding transcription factor activity, RNA polymerase II-specific"/>
    <property type="evidence" value="ECO:0007669"/>
    <property type="project" value="InterPro"/>
</dbReference>
<dbReference type="CDD" id="cd00086">
    <property type="entry name" value="homeodomain"/>
    <property type="match status" value="1"/>
</dbReference>
<dbReference type="Gene3D" id="1.10.10.60">
    <property type="entry name" value="Homeodomain-like"/>
    <property type="match status" value="1"/>
</dbReference>
<dbReference type="InterPro" id="IPR005539">
    <property type="entry name" value="ELK_dom"/>
</dbReference>
<dbReference type="InterPro" id="IPR001356">
    <property type="entry name" value="HD"/>
</dbReference>
<dbReference type="InterPro" id="IPR017970">
    <property type="entry name" value="Homeobox_CS"/>
</dbReference>
<dbReference type="InterPro" id="IPR009057">
    <property type="entry name" value="Homeodomain-like_sf"/>
</dbReference>
<dbReference type="InterPro" id="IPR008422">
    <property type="entry name" value="KN_HD"/>
</dbReference>
<dbReference type="InterPro" id="IPR005540">
    <property type="entry name" value="KNOX1"/>
</dbReference>
<dbReference type="InterPro" id="IPR005541">
    <property type="entry name" value="KNOX2"/>
</dbReference>
<dbReference type="InterPro" id="IPR050224">
    <property type="entry name" value="TALE_homeobox"/>
</dbReference>
<dbReference type="PANTHER" id="PTHR11850">
    <property type="entry name" value="HOMEOBOX PROTEIN TRANSCRIPTION FACTORS"/>
    <property type="match status" value="1"/>
</dbReference>
<dbReference type="Pfam" id="PF03789">
    <property type="entry name" value="ELK"/>
    <property type="match status" value="1"/>
</dbReference>
<dbReference type="Pfam" id="PF05920">
    <property type="entry name" value="Homeobox_KN"/>
    <property type="match status" value="1"/>
</dbReference>
<dbReference type="Pfam" id="PF03790">
    <property type="entry name" value="KNOX1"/>
    <property type="match status" value="1"/>
</dbReference>
<dbReference type="Pfam" id="PF03791">
    <property type="entry name" value="KNOX2"/>
    <property type="match status" value="1"/>
</dbReference>
<dbReference type="SMART" id="SM01188">
    <property type="entry name" value="ELK"/>
    <property type="match status" value="1"/>
</dbReference>
<dbReference type="SMART" id="SM00389">
    <property type="entry name" value="HOX"/>
    <property type="match status" value="1"/>
</dbReference>
<dbReference type="SMART" id="SM01255">
    <property type="entry name" value="KNOX1"/>
    <property type="match status" value="1"/>
</dbReference>
<dbReference type="SMART" id="SM01256">
    <property type="entry name" value="KNOX2"/>
    <property type="match status" value="1"/>
</dbReference>
<dbReference type="SUPFAM" id="SSF46689">
    <property type="entry name" value="Homeodomain-like"/>
    <property type="match status" value="1"/>
</dbReference>
<dbReference type="PROSITE" id="PS51213">
    <property type="entry name" value="ELK"/>
    <property type="match status" value="1"/>
</dbReference>
<dbReference type="PROSITE" id="PS00027">
    <property type="entry name" value="HOMEOBOX_1"/>
    <property type="match status" value="1"/>
</dbReference>
<dbReference type="PROSITE" id="PS50071">
    <property type="entry name" value="HOMEOBOX_2"/>
    <property type="match status" value="1"/>
</dbReference>
<organism>
    <name type="scientific">Oryza sativa subsp. japonica</name>
    <name type="common">Rice</name>
    <dbReference type="NCBI Taxonomy" id="39947"/>
    <lineage>
        <taxon>Eukaryota</taxon>
        <taxon>Viridiplantae</taxon>
        <taxon>Streptophyta</taxon>
        <taxon>Embryophyta</taxon>
        <taxon>Tracheophyta</taxon>
        <taxon>Spermatophyta</taxon>
        <taxon>Magnoliopsida</taxon>
        <taxon>Liliopsida</taxon>
        <taxon>Poales</taxon>
        <taxon>Poaceae</taxon>
        <taxon>BOP clade</taxon>
        <taxon>Oryzoideae</taxon>
        <taxon>Oryzeae</taxon>
        <taxon>Oryzinae</taxon>
        <taxon>Oryza</taxon>
        <taxon>Oryza sativa</taxon>
    </lineage>
</organism>